<organism>
    <name type="scientific">Pongo abelii</name>
    <name type="common">Sumatran orangutan</name>
    <name type="synonym">Pongo pygmaeus abelii</name>
    <dbReference type="NCBI Taxonomy" id="9601"/>
    <lineage>
        <taxon>Eukaryota</taxon>
        <taxon>Metazoa</taxon>
        <taxon>Chordata</taxon>
        <taxon>Craniata</taxon>
        <taxon>Vertebrata</taxon>
        <taxon>Euteleostomi</taxon>
        <taxon>Mammalia</taxon>
        <taxon>Eutheria</taxon>
        <taxon>Euarchontoglires</taxon>
        <taxon>Primates</taxon>
        <taxon>Haplorrhini</taxon>
        <taxon>Catarrhini</taxon>
        <taxon>Hominidae</taxon>
        <taxon>Pongo</taxon>
    </lineage>
</organism>
<accession>Q5R452</accession>
<proteinExistence type="evidence at transcript level"/>
<keyword id="KW-0007">Acetylation</keyword>
<keyword id="KW-0238">DNA-binding</keyword>
<keyword id="KW-1017">Isopeptide bond</keyword>
<keyword id="KW-0488">Methylation</keyword>
<keyword id="KW-0539">Nucleus</keyword>
<keyword id="KW-0597">Phosphoprotein</keyword>
<keyword id="KW-1185">Reference proteome</keyword>
<keyword id="KW-0678">Repressor</keyword>
<keyword id="KW-0694">RNA-binding</keyword>
<keyword id="KW-0804">Transcription</keyword>
<keyword id="KW-0805">Transcription regulation</keyword>
<keyword id="KW-0832">Ubl conjugation</keyword>
<comment type="function">
    <text evidence="2 4">Binds to scaffold/matrix attachment region (S/MAR) DNA and forms a molecular assembly point to allow the formation of a 'transcriptosomal' complex (consisting of SR proteins and RNA polymerase II) coupling transcription and RNA processing (By similarity). Functions as an estrogen receptor corepressor and can also bind to the HSP27 promoter and decrease its transcription (By similarity). Thereby acts as a negative regulator of cell proliferation (By similarity). When associated with RBMX, binds to and stimulates transcription from the SREBF1 promoter (By similarity).</text>
</comment>
<comment type="subunit">
    <text evidence="2 3 4">Monomer and homodimer (By similarity). Interacts with KHDRBS3 (By similarity). Interacts with CLK2 (By similarity). Interacts with POLR2A, ASF/SRSF1, SRp30c/SRFS9 and TRA2B/SFRS10 (By similarity). Interacts with SRPK1 and inhibits its activity (By similarity). Interacts with RBMX (By similarity). Interacts with FUS (By similarity). Interacts with ZBED4 (By similarity).</text>
</comment>
<comment type="subcellular location">
    <subcellularLocation>
        <location evidence="4">Nucleus</location>
    </subcellularLocation>
</comment>
<comment type="PTM">
    <text evidence="4">Sumoylated by PIAS1 with SUMO1 and SUMO2/3, desumoylated by SENP1. Sumoylation is required for transcriptional repressor activity.</text>
</comment>
<gene>
    <name type="primary">SAFB</name>
    <name type="synonym">SAFB1</name>
</gene>
<evidence type="ECO:0000250" key="1"/>
<evidence type="ECO:0000250" key="2">
    <source>
        <dbReference type="UniProtKB" id="D3YXK2"/>
    </source>
</evidence>
<evidence type="ECO:0000250" key="3">
    <source>
        <dbReference type="UniProtKB" id="O88453"/>
    </source>
</evidence>
<evidence type="ECO:0000250" key="4">
    <source>
        <dbReference type="UniProtKB" id="Q15424"/>
    </source>
</evidence>
<evidence type="ECO:0000255" key="5"/>
<evidence type="ECO:0000255" key="6">
    <source>
        <dbReference type="PROSITE-ProRule" id="PRU00176"/>
    </source>
</evidence>
<evidence type="ECO:0000255" key="7">
    <source>
        <dbReference type="PROSITE-ProRule" id="PRU00186"/>
    </source>
</evidence>
<evidence type="ECO:0000256" key="8">
    <source>
        <dbReference type="SAM" id="MobiDB-lite"/>
    </source>
</evidence>
<reference key="1">
    <citation type="submission" date="2004-11" db="EMBL/GenBank/DDBJ databases">
        <authorList>
            <consortium name="The German cDNA consortium"/>
        </authorList>
    </citation>
    <scope>NUCLEOTIDE SEQUENCE [LARGE SCALE MRNA]</scope>
    <source>
        <tissue>Brain cortex</tissue>
    </source>
</reference>
<name>SAFB1_PONAB</name>
<protein>
    <recommendedName>
        <fullName>Scaffold attachment factor B1</fullName>
        <shortName>SAF-B1</shortName>
    </recommendedName>
</protein>
<sequence>MAETLSGLGDSGAAGAAALSSASSETGTRRLSDLRVIDLRAELRKRNVDSSGNKSVLMERLKKAIEDEGGNPDEIEITSEGNKKTSKRSSKGRKPEEEGVEDNGLEENSGDGQEDVETSLENLQDIDIMDISVLDEAEIDNGSVADCVEDDDADNLQESLSDSRELVEGEMKELPEQLQEHAIEDKETINNLDTSSSDFTILQEIEEPSLEPENEKILDILGETCKSEPVKEESSELEQPFAQDTSSVGPDRKLAEEEDLFDSAHPEEGDLDLASESTAHAQSSKADSLLAVVKREPAEQPGDGERTDCEPVGLEPAVEQSSAASELAEASSEELAEAPTEAPSPEARDSKEDGRKFDFDACNEVPPAPKESSTSEGADQKMSSPEDDSDTKRLSKEEKGRSSCGRNFWVSGLSSTTRATDLKNLFSKYGKVVGAKVVTNARSPGARCYGFVTMSTAEEATKCINHLHKTELHGKMISVEKAKNEPVGKKTSDKRDSDGKKEKSSNSDRSANLKRDDKCDRKDDAKKGDDGSGEKSKDQDDQKPGPSERSRATKSGSRGTERTVVMDKSKGVPVISVKTSGSKERASKSLDRKSASREKRSVVSFDKVKEPRKSRDSESHRVRERSEREQRMQAQWEREERERLEIARERLAFQRQRLERERMERERLERERMHVEHERRREQERIHREREELRRQQELRYEQERRPAVRRPYDLDRRDDAYWPEAKRAALDERYHSDFNRQDRFHDFDHRDRGRYPDHSVDRREGSRSMMGEREGQHYPERHGGPERHGRDSRDGWGGYGSDKRMSEGRGLPPPPRRDWGDHGRREDDRAWQGTADGGMMDRDHKRWQGGERSMSGHSGPGHMMNRGGMSGRGSFAPGGASRGHPIPHGGMQGGFGGQSRGSRPSDARFTRRY</sequence>
<dbReference type="EMBL" id="CR861407">
    <property type="protein sequence ID" value="CAH93464.1"/>
    <property type="molecule type" value="mRNA"/>
</dbReference>
<dbReference type="RefSeq" id="NP_001127031.1">
    <property type="nucleotide sequence ID" value="NM_001133559.1"/>
</dbReference>
<dbReference type="SMR" id="Q5R452"/>
<dbReference type="FunCoup" id="Q5R452">
    <property type="interactions" value="2967"/>
</dbReference>
<dbReference type="STRING" id="9601.ENSPPYP00000010573"/>
<dbReference type="GeneID" id="100174056"/>
<dbReference type="KEGG" id="pon:100174056"/>
<dbReference type="CTD" id="6294"/>
<dbReference type="eggNOG" id="KOG4661">
    <property type="taxonomic scope" value="Eukaryota"/>
</dbReference>
<dbReference type="InParanoid" id="Q5R452"/>
<dbReference type="OrthoDB" id="6159259at2759"/>
<dbReference type="Proteomes" id="UP000001595">
    <property type="component" value="Unplaced"/>
</dbReference>
<dbReference type="GO" id="GO:0005634">
    <property type="term" value="C:nucleus"/>
    <property type="evidence" value="ECO:0000250"/>
    <property type="project" value="UniProtKB"/>
</dbReference>
<dbReference type="GO" id="GO:0003682">
    <property type="term" value="F:chromatin binding"/>
    <property type="evidence" value="ECO:0000250"/>
    <property type="project" value="UniProtKB"/>
</dbReference>
<dbReference type="GO" id="GO:0003723">
    <property type="term" value="F:RNA binding"/>
    <property type="evidence" value="ECO:0007669"/>
    <property type="project" value="UniProtKB-KW"/>
</dbReference>
<dbReference type="GO" id="GO:0000978">
    <property type="term" value="F:RNA polymerase II cis-regulatory region sequence-specific DNA binding"/>
    <property type="evidence" value="ECO:0000250"/>
    <property type="project" value="UniProtKB"/>
</dbReference>
<dbReference type="GO" id="GO:0030520">
    <property type="term" value="P:estrogen receptor signaling pathway"/>
    <property type="evidence" value="ECO:0007669"/>
    <property type="project" value="TreeGrafter"/>
</dbReference>
<dbReference type="GO" id="GO:0060765">
    <property type="term" value="P:regulation of androgen receptor signaling pathway"/>
    <property type="evidence" value="ECO:0007669"/>
    <property type="project" value="TreeGrafter"/>
</dbReference>
<dbReference type="GO" id="GO:0050684">
    <property type="term" value="P:regulation of mRNA processing"/>
    <property type="evidence" value="ECO:0007669"/>
    <property type="project" value="TreeGrafter"/>
</dbReference>
<dbReference type="GO" id="GO:0006357">
    <property type="term" value="P:regulation of transcription by RNA polymerase II"/>
    <property type="evidence" value="ECO:0007669"/>
    <property type="project" value="TreeGrafter"/>
</dbReference>
<dbReference type="CDD" id="cd12679">
    <property type="entry name" value="RRM_SAFB1_SAFB2"/>
    <property type="match status" value="1"/>
</dbReference>
<dbReference type="FunFam" id="3.30.70.330:FF:000197">
    <property type="entry name" value="Scaffold attachment factor B2"/>
    <property type="match status" value="1"/>
</dbReference>
<dbReference type="FunFam" id="1.10.720.30:FF:000005">
    <property type="entry name" value="scaffold attachment factor B2 isoform X1"/>
    <property type="match status" value="1"/>
</dbReference>
<dbReference type="Gene3D" id="3.30.70.330">
    <property type="match status" value="1"/>
</dbReference>
<dbReference type="Gene3D" id="1.10.720.30">
    <property type="entry name" value="SAP domain"/>
    <property type="match status" value="1"/>
</dbReference>
<dbReference type="InterPro" id="IPR012677">
    <property type="entry name" value="Nucleotide-bd_a/b_plait_sf"/>
</dbReference>
<dbReference type="InterPro" id="IPR035979">
    <property type="entry name" value="RBD_domain_sf"/>
</dbReference>
<dbReference type="InterPro" id="IPR000504">
    <property type="entry name" value="RRM_dom"/>
</dbReference>
<dbReference type="InterPro" id="IPR051738">
    <property type="entry name" value="SAF_Modulators"/>
</dbReference>
<dbReference type="InterPro" id="IPR034781">
    <property type="entry name" value="SAFB1_2_RBD"/>
</dbReference>
<dbReference type="InterPro" id="IPR003034">
    <property type="entry name" value="SAP_dom"/>
</dbReference>
<dbReference type="InterPro" id="IPR036361">
    <property type="entry name" value="SAP_dom_sf"/>
</dbReference>
<dbReference type="PANTHER" id="PTHR15683">
    <property type="entry name" value="SCAFFOLD ATTACHMENT FACTOR B-RELATED"/>
    <property type="match status" value="1"/>
</dbReference>
<dbReference type="PANTHER" id="PTHR15683:SF6">
    <property type="entry name" value="SCAFFOLD ATTACHMENT FACTOR B1"/>
    <property type="match status" value="1"/>
</dbReference>
<dbReference type="Pfam" id="PF00076">
    <property type="entry name" value="RRM_1"/>
    <property type="match status" value="1"/>
</dbReference>
<dbReference type="Pfam" id="PF02037">
    <property type="entry name" value="SAP"/>
    <property type="match status" value="1"/>
</dbReference>
<dbReference type="SMART" id="SM00360">
    <property type="entry name" value="RRM"/>
    <property type="match status" value="1"/>
</dbReference>
<dbReference type="SMART" id="SM00513">
    <property type="entry name" value="SAP"/>
    <property type="match status" value="1"/>
</dbReference>
<dbReference type="SUPFAM" id="SSF54928">
    <property type="entry name" value="RNA-binding domain, RBD"/>
    <property type="match status" value="1"/>
</dbReference>
<dbReference type="SUPFAM" id="SSF68906">
    <property type="entry name" value="SAP domain"/>
    <property type="match status" value="1"/>
</dbReference>
<dbReference type="PROSITE" id="PS50102">
    <property type="entry name" value="RRM"/>
    <property type="match status" value="1"/>
</dbReference>
<dbReference type="PROSITE" id="PS50800">
    <property type="entry name" value="SAP"/>
    <property type="match status" value="1"/>
</dbReference>
<feature type="initiator methionine" description="Removed" evidence="4">
    <location>
        <position position="1"/>
    </location>
</feature>
<feature type="chain" id="PRO_0000307797" description="Scaffold attachment factor B1">
    <location>
        <begin position="2"/>
        <end position="914"/>
    </location>
</feature>
<feature type="domain" description="SAP" evidence="7">
    <location>
        <begin position="31"/>
        <end position="65"/>
    </location>
</feature>
<feature type="domain" description="RRM" evidence="6">
    <location>
        <begin position="406"/>
        <end position="484"/>
    </location>
</feature>
<feature type="region of interest" description="Disordered" evidence="8">
    <location>
        <begin position="1"/>
        <end position="33"/>
    </location>
</feature>
<feature type="region of interest" description="Disordered" evidence="8">
    <location>
        <begin position="64"/>
        <end position="117"/>
    </location>
</feature>
<feature type="region of interest" description="Disordered" evidence="8">
    <location>
        <begin position="221"/>
        <end position="407"/>
    </location>
</feature>
<feature type="region of interest" description="Disordered" evidence="8">
    <location>
        <begin position="477"/>
        <end position="636"/>
    </location>
</feature>
<feature type="region of interest" description="Interaction with POLR2A; SFRS1; SFRS9 and SFRS10" evidence="3">
    <location>
        <begin position="528"/>
        <end position="791"/>
    </location>
</feature>
<feature type="region of interest" description="Interaction with SAFB2" evidence="1">
    <location>
        <begin position="599"/>
        <end position="914"/>
    </location>
</feature>
<feature type="region of interest" description="Disordered" evidence="8">
    <location>
        <begin position="670"/>
        <end position="706"/>
    </location>
</feature>
<feature type="region of interest" description="Disordered" evidence="8">
    <location>
        <begin position="748"/>
        <end position="914"/>
    </location>
</feature>
<feature type="short sequence motif" description="Nuclear localization signal" evidence="5">
    <location>
        <begin position="599"/>
        <end position="616"/>
    </location>
</feature>
<feature type="compositionally biased region" description="Low complexity" evidence="8">
    <location>
        <begin position="1"/>
        <end position="24"/>
    </location>
</feature>
<feature type="compositionally biased region" description="Acidic residues" evidence="8">
    <location>
        <begin position="67"/>
        <end position="77"/>
    </location>
</feature>
<feature type="compositionally biased region" description="Acidic residues" evidence="8">
    <location>
        <begin position="98"/>
        <end position="117"/>
    </location>
</feature>
<feature type="compositionally biased region" description="Basic and acidic residues" evidence="8">
    <location>
        <begin position="225"/>
        <end position="234"/>
    </location>
</feature>
<feature type="compositionally biased region" description="Polar residues" evidence="8">
    <location>
        <begin position="275"/>
        <end position="286"/>
    </location>
</feature>
<feature type="compositionally biased region" description="Basic and acidic residues" evidence="8">
    <location>
        <begin position="293"/>
        <end position="309"/>
    </location>
</feature>
<feature type="compositionally biased region" description="Low complexity" evidence="8">
    <location>
        <begin position="319"/>
        <end position="330"/>
    </location>
</feature>
<feature type="compositionally biased region" description="Basic and acidic residues" evidence="8">
    <location>
        <begin position="346"/>
        <end position="359"/>
    </location>
</feature>
<feature type="compositionally biased region" description="Polar residues" evidence="8">
    <location>
        <begin position="371"/>
        <end position="383"/>
    </location>
</feature>
<feature type="compositionally biased region" description="Basic and acidic residues" evidence="8">
    <location>
        <begin position="390"/>
        <end position="401"/>
    </location>
</feature>
<feature type="compositionally biased region" description="Basic and acidic residues" evidence="8">
    <location>
        <begin position="477"/>
        <end position="551"/>
    </location>
</feature>
<feature type="compositionally biased region" description="Basic and acidic residues" evidence="8">
    <location>
        <begin position="559"/>
        <end position="570"/>
    </location>
</feature>
<feature type="compositionally biased region" description="Basic and acidic residues" evidence="8">
    <location>
        <begin position="581"/>
        <end position="636"/>
    </location>
</feature>
<feature type="compositionally biased region" description="Basic and acidic residues" evidence="8">
    <location>
        <begin position="748"/>
        <end position="795"/>
    </location>
</feature>
<feature type="compositionally biased region" description="Basic and acidic residues" evidence="8">
    <location>
        <begin position="816"/>
        <end position="831"/>
    </location>
</feature>
<feature type="compositionally biased region" description="Basic and acidic residues" evidence="8">
    <location>
        <begin position="840"/>
        <end position="850"/>
    </location>
</feature>
<feature type="compositionally biased region" description="Gly residues" evidence="8">
    <location>
        <begin position="891"/>
        <end position="900"/>
    </location>
</feature>
<feature type="compositionally biased region" description="Basic and acidic residues" evidence="8">
    <location>
        <begin position="904"/>
        <end position="914"/>
    </location>
</feature>
<feature type="modified residue" description="N-acetylalanine" evidence="4">
    <location>
        <position position="2"/>
    </location>
</feature>
<feature type="modified residue" description="Phosphoserine" evidence="3">
    <location>
        <position position="24"/>
    </location>
</feature>
<feature type="modified residue" description="Phosphoserine" evidence="4">
    <location>
        <position position="55"/>
    </location>
</feature>
<feature type="modified residue" description="Phosphoserine" evidence="4">
    <location>
        <position position="79"/>
    </location>
</feature>
<feature type="modified residue" description="Phosphothreonine" evidence="4">
    <location>
        <position position="188"/>
    </location>
</feature>
<feature type="modified residue" description="Phosphoserine" evidence="4">
    <location>
        <position position="195"/>
    </location>
</feature>
<feature type="modified residue" description="Phosphoserine" evidence="4">
    <location>
        <position position="197"/>
    </location>
</feature>
<feature type="modified residue" description="Phosphoserine" evidence="3">
    <location>
        <position position="209"/>
    </location>
</feature>
<feature type="modified residue" description="Phosphoserine" evidence="4">
    <location>
        <position position="383"/>
    </location>
</feature>
<feature type="modified residue" description="Phosphoserine" evidence="4">
    <location>
        <position position="384"/>
    </location>
</feature>
<feature type="modified residue" description="Phosphoserine" evidence="4">
    <location>
        <position position="415"/>
    </location>
</feature>
<feature type="modified residue" description="Phosphoserine" evidence="4">
    <location>
        <position position="580"/>
    </location>
</feature>
<feature type="modified residue" description="Phosphoserine" evidence="4">
    <location>
        <position position="582"/>
    </location>
</feature>
<feature type="modified residue" description="Phosphoserine" evidence="4">
    <location>
        <position position="601"/>
    </location>
</feature>
<feature type="modified residue" description="Phosphoserine" evidence="4">
    <location>
        <position position="604"/>
    </location>
</feature>
<feature type="modified residue" description="N6-acetyllysine" evidence="4">
    <location>
        <position position="607"/>
    </location>
</feature>
<feature type="modified residue" description="Omega-N-methylarginine" evidence="4">
    <location>
        <position position="810"/>
    </location>
</feature>
<feature type="modified residue" description="Asymmetric dimethylarginine" evidence="4">
    <location>
        <position position="867"/>
    </location>
</feature>
<feature type="modified residue" description="Asymmetric dimethylarginine" evidence="4">
    <location>
        <position position="873"/>
    </location>
</feature>
<feature type="modified residue" description="Asymmetric dimethylarginine" evidence="4">
    <location>
        <position position="883"/>
    </location>
</feature>
<feature type="cross-link" description="Glycyl lysine isopeptide (Lys-Gly) (interchain with G-Cter in SUMO2)" evidence="4">
    <location>
        <position position="172"/>
    </location>
</feature>
<feature type="cross-link" description="Glycyl lysine isopeptide (Lys-Gly) (interchain with G-Cter in SUMO2)" evidence="4">
    <location>
        <position position="186"/>
    </location>
</feature>
<feature type="cross-link" description="Glycyl lysine isopeptide (Lys-Gly) (interchain with G-Cter in SUMO)" evidence="1">
    <location>
        <position position="231"/>
    </location>
</feature>
<feature type="cross-link" description="Glycyl lysine isopeptide (Lys-Gly) (interchain with G-Cter in SUMO)" evidence="1">
    <location>
        <position position="294"/>
    </location>
</feature>
<feature type="cross-link" description="Glycyl lysine isopeptide (Lys-Gly) (interchain with G-Cter in SUMO2)" evidence="4">
    <location>
        <position position="381"/>
    </location>
</feature>
<feature type="cross-link" description="Glycyl lysine isopeptide (Lys-Gly) (interchain with G-Cter in SUMO2)" evidence="4">
    <location>
        <position position="392"/>
    </location>
</feature>
<feature type="cross-link" description="Glycyl lysine isopeptide (Lys-Gly) (interchain with G-Cter in SUMO2)" evidence="4">
    <location>
        <position position="483"/>
    </location>
</feature>
<feature type="cross-link" description="Glycyl lysine isopeptide (Lys-Gly) (interchain with G-Cter in SUMO2)" evidence="4">
    <location>
        <position position="514"/>
    </location>
</feature>
<feature type="cross-link" description="Glycyl lysine isopeptide (Lys-Gly) (interchain with G-Cter in SUMO2)" evidence="4">
    <location>
        <position position="543"/>
    </location>
</feature>
<feature type="cross-link" description="Glycyl lysine isopeptide (Lys-Gly) (interchain with G-Cter in SUMO2)" evidence="4">
    <location>
        <position position="570"/>
    </location>
</feature>
<feature type="cross-link" description="Glycyl lysine isopeptide (Lys-Gly) (interchain with G-Cter in SUMO1); alternate" evidence="4">
    <location>
        <position position="578"/>
    </location>
</feature>
<feature type="cross-link" description="Glycyl lysine isopeptide (Lys-Gly) (interchain with G-Cter in SUMO2); alternate" evidence="4">
    <location>
        <position position="578"/>
    </location>
</feature>
<feature type="cross-link" description="Glycyl lysine isopeptide (Lys-Gly) (interchain with G-Cter in SUMO2)" evidence="4">
    <location>
        <position position="846"/>
    </location>
</feature>